<organism>
    <name type="scientific">Myxococcus xanthus (strain DK1622)</name>
    <dbReference type="NCBI Taxonomy" id="246197"/>
    <lineage>
        <taxon>Bacteria</taxon>
        <taxon>Pseudomonadati</taxon>
        <taxon>Myxococcota</taxon>
        <taxon>Myxococcia</taxon>
        <taxon>Myxococcales</taxon>
        <taxon>Cystobacterineae</taxon>
        <taxon>Myxococcaceae</taxon>
        <taxon>Myxococcus</taxon>
    </lineage>
</organism>
<protein>
    <recommendedName>
        <fullName evidence="1">Glutamate--tRNA ligase</fullName>
        <ecNumber evidence="1">6.1.1.17</ecNumber>
    </recommendedName>
    <alternativeName>
        <fullName evidence="1">Glutamyl-tRNA synthetase</fullName>
        <shortName evidence="1">GluRS</shortName>
    </alternativeName>
</protein>
<accession>Q1D8Y1</accession>
<reference key="1">
    <citation type="journal article" date="2006" name="Proc. Natl. Acad. Sci. U.S.A.">
        <title>Evolution of sensory complexity recorded in a myxobacterial genome.</title>
        <authorList>
            <person name="Goldman B.S."/>
            <person name="Nierman W.C."/>
            <person name="Kaiser D."/>
            <person name="Slater S.C."/>
            <person name="Durkin A.S."/>
            <person name="Eisen J.A."/>
            <person name="Ronning C.M."/>
            <person name="Barbazuk W.B."/>
            <person name="Blanchard M."/>
            <person name="Field C."/>
            <person name="Halling C."/>
            <person name="Hinkle G."/>
            <person name="Iartchuk O."/>
            <person name="Kim H.S."/>
            <person name="Mackenzie C."/>
            <person name="Madupu R."/>
            <person name="Miller N."/>
            <person name="Shvartsbeyn A."/>
            <person name="Sullivan S.A."/>
            <person name="Vaudin M."/>
            <person name="Wiegand R."/>
            <person name="Kaplan H.B."/>
        </authorList>
    </citation>
    <scope>NUCLEOTIDE SEQUENCE [LARGE SCALE GENOMIC DNA]</scope>
    <source>
        <strain>DK1622</strain>
    </source>
</reference>
<dbReference type="EC" id="6.1.1.17" evidence="1"/>
<dbReference type="EMBL" id="CP000113">
    <property type="protein sequence ID" value="ABF89409.1"/>
    <property type="molecule type" value="Genomic_DNA"/>
</dbReference>
<dbReference type="RefSeq" id="WP_011552743.1">
    <property type="nucleotide sequence ID" value="NC_008095.1"/>
</dbReference>
<dbReference type="SMR" id="Q1D8Y1"/>
<dbReference type="STRING" id="246197.MXAN_2675"/>
<dbReference type="EnsemblBacteria" id="ABF89409">
    <property type="protein sequence ID" value="ABF89409"/>
    <property type="gene ID" value="MXAN_2675"/>
</dbReference>
<dbReference type="GeneID" id="41360053"/>
<dbReference type="KEGG" id="mxa:MXAN_2675"/>
<dbReference type="eggNOG" id="COG0008">
    <property type="taxonomic scope" value="Bacteria"/>
</dbReference>
<dbReference type="HOGENOM" id="CLU_015768_6_3_7"/>
<dbReference type="OrthoDB" id="9807503at2"/>
<dbReference type="Proteomes" id="UP000002402">
    <property type="component" value="Chromosome"/>
</dbReference>
<dbReference type="GO" id="GO:0005829">
    <property type="term" value="C:cytosol"/>
    <property type="evidence" value="ECO:0007669"/>
    <property type="project" value="TreeGrafter"/>
</dbReference>
<dbReference type="GO" id="GO:0005524">
    <property type="term" value="F:ATP binding"/>
    <property type="evidence" value="ECO:0007669"/>
    <property type="project" value="UniProtKB-UniRule"/>
</dbReference>
<dbReference type="GO" id="GO:0004818">
    <property type="term" value="F:glutamate-tRNA ligase activity"/>
    <property type="evidence" value="ECO:0007669"/>
    <property type="project" value="UniProtKB-UniRule"/>
</dbReference>
<dbReference type="GO" id="GO:0000049">
    <property type="term" value="F:tRNA binding"/>
    <property type="evidence" value="ECO:0007669"/>
    <property type="project" value="InterPro"/>
</dbReference>
<dbReference type="GO" id="GO:0008270">
    <property type="term" value="F:zinc ion binding"/>
    <property type="evidence" value="ECO:0007669"/>
    <property type="project" value="UniProtKB-UniRule"/>
</dbReference>
<dbReference type="GO" id="GO:0006424">
    <property type="term" value="P:glutamyl-tRNA aminoacylation"/>
    <property type="evidence" value="ECO:0007669"/>
    <property type="project" value="UniProtKB-UniRule"/>
</dbReference>
<dbReference type="CDD" id="cd00808">
    <property type="entry name" value="GluRS_core"/>
    <property type="match status" value="1"/>
</dbReference>
<dbReference type="FunFam" id="3.40.50.620:FF:000007">
    <property type="entry name" value="Glutamate--tRNA ligase"/>
    <property type="match status" value="1"/>
</dbReference>
<dbReference type="Gene3D" id="1.10.10.350">
    <property type="match status" value="1"/>
</dbReference>
<dbReference type="Gene3D" id="1.10.8.70">
    <property type="entry name" value="Glutamate-tRNA synthetase, class I, anticodon-binding domain 1"/>
    <property type="match status" value="1"/>
</dbReference>
<dbReference type="Gene3D" id="3.40.50.620">
    <property type="entry name" value="HUPs"/>
    <property type="match status" value="1"/>
</dbReference>
<dbReference type="HAMAP" id="MF_00022">
    <property type="entry name" value="Glu_tRNA_synth_type1"/>
    <property type="match status" value="1"/>
</dbReference>
<dbReference type="InterPro" id="IPR045462">
    <property type="entry name" value="aa-tRNA-synth_I_cd-bd"/>
</dbReference>
<dbReference type="InterPro" id="IPR020751">
    <property type="entry name" value="aa-tRNA-synth_I_codon-bd_sub2"/>
</dbReference>
<dbReference type="InterPro" id="IPR001412">
    <property type="entry name" value="aa-tRNA-synth_I_CS"/>
</dbReference>
<dbReference type="InterPro" id="IPR008925">
    <property type="entry name" value="aa_tRNA-synth_I_cd-bd_sf"/>
</dbReference>
<dbReference type="InterPro" id="IPR004527">
    <property type="entry name" value="Glu-tRNA-ligase_bac/mito"/>
</dbReference>
<dbReference type="InterPro" id="IPR020752">
    <property type="entry name" value="Glu-tRNA-synth_I_codon-bd_sub1"/>
</dbReference>
<dbReference type="InterPro" id="IPR000924">
    <property type="entry name" value="Glu/Gln-tRNA-synth"/>
</dbReference>
<dbReference type="InterPro" id="IPR020058">
    <property type="entry name" value="Glu/Gln-tRNA-synth_Ib_cat-dom"/>
</dbReference>
<dbReference type="InterPro" id="IPR049940">
    <property type="entry name" value="GluQ/Sye"/>
</dbReference>
<dbReference type="InterPro" id="IPR033910">
    <property type="entry name" value="GluRS_core"/>
</dbReference>
<dbReference type="InterPro" id="IPR014729">
    <property type="entry name" value="Rossmann-like_a/b/a_fold"/>
</dbReference>
<dbReference type="NCBIfam" id="TIGR00464">
    <property type="entry name" value="gltX_bact"/>
    <property type="match status" value="1"/>
</dbReference>
<dbReference type="PANTHER" id="PTHR43311">
    <property type="entry name" value="GLUTAMATE--TRNA LIGASE"/>
    <property type="match status" value="1"/>
</dbReference>
<dbReference type="PANTHER" id="PTHR43311:SF2">
    <property type="entry name" value="GLUTAMATE--TRNA LIGASE, MITOCHONDRIAL-RELATED"/>
    <property type="match status" value="1"/>
</dbReference>
<dbReference type="Pfam" id="PF19269">
    <property type="entry name" value="Anticodon_2"/>
    <property type="match status" value="1"/>
</dbReference>
<dbReference type="Pfam" id="PF00749">
    <property type="entry name" value="tRNA-synt_1c"/>
    <property type="match status" value="1"/>
</dbReference>
<dbReference type="PRINTS" id="PR00987">
    <property type="entry name" value="TRNASYNTHGLU"/>
</dbReference>
<dbReference type="SUPFAM" id="SSF48163">
    <property type="entry name" value="An anticodon-binding domain of class I aminoacyl-tRNA synthetases"/>
    <property type="match status" value="1"/>
</dbReference>
<dbReference type="SUPFAM" id="SSF52374">
    <property type="entry name" value="Nucleotidylyl transferase"/>
    <property type="match status" value="1"/>
</dbReference>
<dbReference type="PROSITE" id="PS00178">
    <property type="entry name" value="AA_TRNA_LIGASE_I"/>
    <property type="match status" value="1"/>
</dbReference>
<name>SYE_MYXXD</name>
<keyword id="KW-0030">Aminoacyl-tRNA synthetase</keyword>
<keyword id="KW-0067">ATP-binding</keyword>
<keyword id="KW-0963">Cytoplasm</keyword>
<keyword id="KW-0436">Ligase</keyword>
<keyword id="KW-0479">Metal-binding</keyword>
<keyword id="KW-0547">Nucleotide-binding</keyword>
<keyword id="KW-0648">Protein biosynthesis</keyword>
<keyword id="KW-1185">Reference proteome</keyword>
<keyword id="KW-0862">Zinc</keyword>
<comment type="function">
    <text evidence="1">Catalyzes the attachment of glutamate to tRNA(Glu) in a two-step reaction: glutamate is first activated by ATP to form Glu-AMP and then transferred to the acceptor end of tRNA(Glu).</text>
</comment>
<comment type="catalytic activity">
    <reaction evidence="1">
        <text>tRNA(Glu) + L-glutamate + ATP = L-glutamyl-tRNA(Glu) + AMP + diphosphate</text>
        <dbReference type="Rhea" id="RHEA:23540"/>
        <dbReference type="Rhea" id="RHEA-COMP:9663"/>
        <dbReference type="Rhea" id="RHEA-COMP:9680"/>
        <dbReference type="ChEBI" id="CHEBI:29985"/>
        <dbReference type="ChEBI" id="CHEBI:30616"/>
        <dbReference type="ChEBI" id="CHEBI:33019"/>
        <dbReference type="ChEBI" id="CHEBI:78442"/>
        <dbReference type="ChEBI" id="CHEBI:78520"/>
        <dbReference type="ChEBI" id="CHEBI:456215"/>
        <dbReference type="EC" id="6.1.1.17"/>
    </reaction>
</comment>
<comment type="cofactor">
    <cofactor evidence="1">
        <name>Zn(2+)</name>
        <dbReference type="ChEBI" id="CHEBI:29105"/>
    </cofactor>
    <text evidence="1">Binds 1 zinc ion per subunit.</text>
</comment>
<comment type="subunit">
    <text evidence="1">Monomer.</text>
</comment>
<comment type="subcellular location">
    <subcellularLocation>
        <location evidence="1">Cytoplasm</location>
    </subcellularLocation>
</comment>
<comment type="similarity">
    <text evidence="1">Belongs to the class-I aminoacyl-tRNA synthetase family. Glutamate--tRNA ligase type 1 subfamily.</text>
</comment>
<gene>
    <name evidence="1" type="primary">gltX</name>
    <name type="ordered locus">MXAN_2675</name>
</gene>
<feature type="chain" id="PRO_0000330984" description="Glutamate--tRNA ligase">
    <location>
        <begin position="1"/>
        <end position="479"/>
    </location>
</feature>
<feature type="short sequence motif" description="'HIGH' region" evidence="1">
    <location>
        <begin position="11"/>
        <end position="21"/>
    </location>
</feature>
<feature type="short sequence motif" description="'KMSKS' region" evidence="1">
    <location>
        <begin position="250"/>
        <end position="254"/>
    </location>
</feature>
<feature type="binding site" evidence="1">
    <location>
        <position position="108"/>
    </location>
    <ligand>
        <name>Zn(2+)</name>
        <dbReference type="ChEBI" id="CHEBI:29105"/>
    </ligand>
</feature>
<feature type="binding site" evidence="1">
    <location>
        <position position="110"/>
    </location>
    <ligand>
        <name>Zn(2+)</name>
        <dbReference type="ChEBI" id="CHEBI:29105"/>
    </ligand>
</feature>
<feature type="binding site" evidence="1">
    <location>
        <position position="135"/>
    </location>
    <ligand>
        <name>Zn(2+)</name>
        <dbReference type="ChEBI" id="CHEBI:29105"/>
    </ligand>
</feature>
<feature type="binding site" evidence="1">
    <location>
        <position position="137"/>
    </location>
    <ligand>
        <name>Zn(2+)</name>
        <dbReference type="ChEBI" id="CHEBI:29105"/>
    </ligand>
</feature>
<feature type="binding site" evidence="1">
    <location>
        <position position="253"/>
    </location>
    <ligand>
        <name>ATP</name>
        <dbReference type="ChEBI" id="CHEBI:30616"/>
    </ligand>
</feature>
<proteinExistence type="inferred from homology"/>
<sequence>MPPALRVRFAPSPTGYLHIGGARTALMNFLQARRQGGTFVLRMEDTDQGRSTPESVQAILDGLNWLGIDWDEGPGKEGPYAPYFQMQRLDTYRKHADQLIAEGKAYRCYCTKEDLDAQRQVAEKAGGAFKYPGTCRERTEPPAGRNAADAVIRFKMPAGDGSVSFTDKALGTITKTHSDLDDWVMMRADGIPVYNFGCVIDDHLMDITLVARGQEHVNSTFPQLMLYQALGWTPPDFAHLPLILGPDREKLSKRKHPEADVMVHKRNGVMPEALLNFVIRLGWSHGNDEVISREQMLEWFDFSDVGTTSGVWNPEKLLWLNQQWMKQLPVETVVERLLPFLEAKGIQAKGDPRLETLVRTLRERSNTLEDIATTAANVYFRSGITLDEKAATKHLSGESLNLLRKVRETLTALPEWSVEALDGVVKQVSEASSVGMGKVAQPIRVALTGNTTSPGIGETLVLVGRDESLLRIDAALTRG</sequence>
<evidence type="ECO:0000255" key="1">
    <source>
        <dbReference type="HAMAP-Rule" id="MF_00022"/>
    </source>
</evidence>